<dbReference type="EC" id="5.6.1.7" evidence="1"/>
<dbReference type="EMBL" id="CP000097">
    <property type="protein sequence ID" value="ABB25474.1"/>
    <property type="molecule type" value="Genomic_DNA"/>
</dbReference>
<dbReference type="SMR" id="Q3AZK3"/>
<dbReference type="STRING" id="316279.Syncc9902_0506"/>
<dbReference type="KEGG" id="sye:Syncc9902_0506"/>
<dbReference type="eggNOG" id="COG0459">
    <property type="taxonomic scope" value="Bacteria"/>
</dbReference>
<dbReference type="HOGENOM" id="CLU_016503_3_0_3"/>
<dbReference type="OrthoDB" id="9766614at2"/>
<dbReference type="Proteomes" id="UP000002712">
    <property type="component" value="Chromosome"/>
</dbReference>
<dbReference type="GO" id="GO:0005737">
    <property type="term" value="C:cytoplasm"/>
    <property type="evidence" value="ECO:0007669"/>
    <property type="project" value="UniProtKB-SubCell"/>
</dbReference>
<dbReference type="GO" id="GO:0005524">
    <property type="term" value="F:ATP binding"/>
    <property type="evidence" value="ECO:0007669"/>
    <property type="project" value="UniProtKB-UniRule"/>
</dbReference>
<dbReference type="GO" id="GO:0140662">
    <property type="term" value="F:ATP-dependent protein folding chaperone"/>
    <property type="evidence" value="ECO:0007669"/>
    <property type="project" value="InterPro"/>
</dbReference>
<dbReference type="GO" id="GO:0016853">
    <property type="term" value="F:isomerase activity"/>
    <property type="evidence" value="ECO:0007669"/>
    <property type="project" value="UniProtKB-KW"/>
</dbReference>
<dbReference type="GO" id="GO:0051082">
    <property type="term" value="F:unfolded protein binding"/>
    <property type="evidence" value="ECO:0007669"/>
    <property type="project" value="UniProtKB-UniRule"/>
</dbReference>
<dbReference type="GO" id="GO:0042026">
    <property type="term" value="P:protein refolding"/>
    <property type="evidence" value="ECO:0007669"/>
    <property type="project" value="UniProtKB-UniRule"/>
</dbReference>
<dbReference type="CDD" id="cd03344">
    <property type="entry name" value="GroEL"/>
    <property type="match status" value="1"/>
</dbReference>
<dbReference type="FunFam" id="3.50.7.10:FF:000001">
    <property type="entry name" value="60 kDa chaperonin"/>
    <property type="match status" value="1"/>
</dbReference>
<dbReference type="Gene3D" id="3.50.7.10">
    <property type="entry name" value="GroEL"/>
    <property type="match status" value="1"/>
</dbReference>
<dbReference type="Gene3D" id="1.10.560.10">
    <property type="entry name" value="GroEL-like equatorial domain"/>
    <property type="match status" value="1"/>
</dbReference>
<dbReference type="Gene3D" id="3.30.260.10">
    <property type="entry name" value="TCP-1-like chaperonin intermediate domain"/>
    <property type="match status" value="1"/>
</dbReference>
<dbReference type="HAMAP" id="MF_00600">
    <property type="entry name" value="CH60"/>
    <property type="match status" value="1"/>
</dbReference>
<dbReference type="InterPro" id="IPR018370">
    <property type="entry name" value="Chaperonin_Cpn60_CS"/>
</dbReference>
<dbReference type="InterPro" id="IPR001844">
    <property type="entry name" value="Cpn60/GroEL"/>
</dbReference>
<dbReference type="InterPro" id="IPR002423">
    <property type="entry name" value="Cpn60/GroEL/TCP-1"/>
</dbReference>
<dbReference type="InterPro" id="IPR027409">
    <property type="entry name" value="GroEL-like_apical_dom_sf"/>
</dbReference>
<dbReference type="InterPro" id="IPR027413">
    <property type="entry name" value="GROEL-like_equatorial_sf"/>
</dbReference>
<dbReference type="InterPro" id="IPR027410">
    <property type="entry name" value="TCP-1-like_intermed_sf"/>
</dbReference>
<dbReference type="NCBIfam" id="TIGR02348">
    <property type="entry name" value="GroEL"/>
    <property type="match status" value="1"/>
</dbReference>
<dbReference type="NCBIfam" id="NF000592">
    <property type="entry name" value="PRK00013.1"/>
    <property type="match status" value="1"/>
</dbReference>
<dbReference type="NCBIfam" id="NF009487">
    <property type="entry name" value="PRK12849.1"/>
    <property type="match status" value="1"/>
</dbReference>
<dbReference type="NCBIfam" id="NF009488">
    <property type="entry name" value="PRK12850.1"/>
    <property type="match status" value="1"/>
</dbReference>
<dbReference type="NCBIfam" id="NF009489">
    <property type="entry name" value="PRK12851.1"/>
    <property type="match status" value="1"/>
</dbReference>
<dbReference type="PANTHER" id="PTHR45633">
    <property type="entry name" value="60 KDA HEAT SHOCK PROTEIN, MITOCHONDRIAL"/>
    <property type="match status" value="1"/>
</dbReference>
<dbReference type="Pfam" id="PF00118">
    <property type="entry name" value="Cpn60_TCP1"/>
    <property type="match status" value="1"/>
</dbReference>
<dbReference type="PRINTS" id="PR00298">
    <property type="entry name" value="CHAPERONIN60"/>
</dbReference>
<dbReference type="SUPFAM" id="SSF52029">
    <property type="entry name" value="GroEL apical domain-like"/>
    <property type="match status" value="1"/>
</dbReference>
<dbReference type="SUPFAM" id="SSF48592">
    <property type="entry name" value="GroEL equatorial domain-like"/>
    <property type="match status" value="2"/>
</dbReference>
<dbReference type="PROSITE" id="PS00296">
    <property type="entry name" value="CHAPERONINS_CPN60"/>
    <property type="match status" value="1"/>
</dbReference>
<evidence type="ECO:0000255" key="1">
    <source>
        <dbReference type="HAMAP-Rule" id="MF_00600"/>
    </source>
</evidence>
<name>CH601_SYNS9</name>
<keyword id="KW-0067">ATP-binding</keyword>
<keyword id="KW-0143">Chaperone</keyword>
<keyword id="KW-0963">Cytoplasm</keyword>
<keyword id="KW-0413">Isomerase</keyword>
<keyword id="KW-0547">Nucleotide-binding</keyword>
<keyword id="KW-1185">Reference proteome</keyword>
<protein>
    <recommendedName>
        <fullName evidence="1">Chaperonin GroEL 1</fullName>
        <ecNumber evidence="1">5.6.1.7</ecNumber>
    </recommendedName>
    <alternativeName>
        <fullName evidence="1">60 kDa chaperonin 1</fullName>
    </alternativeName>
    <alternativeName>
        <fullName evidence="1">Chaperonin-60 1</fullName>
        <shortName evidence="1">Cpn60 1</shortName>
    </alternativeName>
</protein>
<accession>Q3AZK3</accession>
<sequence length="544" mass="57187">MAKRIIYNENARRALEKGIDILAESVAVTLGPKGRNVVLEKKFGSPQIINDGVTIAKEIELEDHIENTGVALIRQAASKTNDAAGDGTTTATVLAHAMVKAGLRNVAAGANAITLKKGIDKASDFLVGKIKDMAKPIADSNAIAQVGTISAGNDEEVGKMIADAMDKVGKEGVISLEEGKSMETELEVTEGMRFDKGYISPYFATDTERMEAVLDEPYILLTDKKIGLVQDLVPVLEQIARTGKPLLIIAEDIEKEALATLVVNRLRGVLNVAAVKAPGFGDRRKAMLEDMAVLTNGQLITEDAGLKLENAKLEMLGTARRITINKDTTTIVAEGNEAAVGARCEQIKKQMDETDSTYDKEKLQERLAKLAGGVAVVKVGAATETEMKDKKLRLEDAINATKAAVEEGIVPGGGTTLAHLAPALEEWANGNLSGEELIGANIVAAALTAPLMRIAENAGANGAVVAENVKSRSNNEGYNAANGDYVDMLAAGIVDPAKVTRSGLQNAASIAGMVLTTECIVADLPEKKDAAPAGGGMGGGDFDY</sequence>
<feature type="chain" id="PRO_0000257004" description="Chaperonin GroEL 1">
    <location>
        <begin position="1"/>
        <end position="544"/>
    </location>
</feature>
<feature type="binding site" evidence="1">
    <location>
        <begin position="29"/>
        <end position="32"/>
    </location>
    <ligand>
        <name>ATP</name>
        <dbReference type="ChEBI" id="CHEBI:30616"/>
    </ligand>
</feature>
<feature type="binding site" evidence="1">
    <location>
        <begin position="86"/>
        <end position="90"/>
    </location>
    <ligand>
        <name>ATP</name>
        <dbReference type="ChEBI" id="CHEBI:30616"/>
    </ligand>
</feature>
<feature type="binding site" evidence="1">
    <location>
        <position position="413"/>
    </location>
    <ligand>
        <name>ATP</name>
        <dbReference type="ChEBI" id="CHEBI:30616"/>
    </ligand>
</feature>
<feature type="binding site" evidence="1">
    <location>
        <begin position="479"/>
        <end position="481"/>
    </location>
    <ligand>
        <name>ATP</name>
        <dbReference type="ChEBI" id="CHEBI:30616"/>
    </ligand>
</feature>
<feature type="binding site" evidence="1">
    <location>
        <position position="495"/>
    </location>
    <ligand>
        <name>ATP</name>
        <dbReference type="ChEBI" id="CHEBI:30616"/>
    </ligand>
</feature>
<reference key="1">
    <citation type="submission" date="2005-08" db="EMBL/GenBank/DDBJ databases">
        <title>Complete sequence of Synechococcus sp. CC9902.</title>
        <authorList>
            <person name="Copeland A."/>
            <person name="Lucas S."/>
            <person name="Lapidus A."/>
            <person name="Barry K."/>
            <person name="Detter J.C."/>
            <person name="Glavina T."/>
            <person name="Hammon N."/>
            <person name="Israni S."/>
            <person name="Pitluck S."/>
            <person name="Martinez M."/>
            <person name="Schmutz J."/>
            <person name="Larimer F."/>
            <person name="Land M."/>
            <person name="Kyrpides N."/>
            <person name="Ivanova N."/>
            <person name="Richardson P."/>
        </authorList>
    </citation>
    <scope>NUCLEOTIDE SEQUENCE [LARGE SCALE GENOMIC DNA]</scope>
    <source>
        <strain>CC9902</strain>
    </source>
</reference>
<proteinExistence type="inferred from homology"/>
<gene>
    <name evidence="1" type="primary">groEL1</name>
    <name evidence="1" type="synonym">groL1</name>
    <name type="ordered locus">Syncc9902_0506</name>
</gene>
<comment type="function">
    <text evidence="1">Together with its co-chaperonin GroES, plays an essential role in assisting protein folding. The GroEL-GroES system forms a nano-cage that allows encapsulation of the non-native substrate proteins and provides a physical environment optimized to promote and accelerate protein folding.</text>
</comment>
<comment type="catalytic activity">
    <reaction evidence="1">
        <text>ATP + H2O + a folded polypeptide = ADP + phosphate + an unfolded polypeptide.</text>
        <dbReference type="EC" id="5.6.1.7"/>
    </reaction>
</comment>
<comment type="subunit">
    <text evidence="1">Forms a cylinder of 14 subunits composed of two heptameric rings stacked back-to-back. Interacts with the co-chaperonin GroES.</text>
</comment>
<comment type="subcellular location">
    <subcellularLocation>
        <location evidence="1">Cytoplasm</location>
    </subcellularLocation>
</comment>
<comment type="similarity">
    <text evidence="1">Belongs to the chaperonin (HSP60) family.</text>
</comment>
<organism>
    <name type="scientific">Synechococcus sp. (strain CC9902)</name>
    <dbReference type="NCBI Taxonomy" id="316279"/>
    <lineage>
        <taxon>Bacteria</taxon>
        <taxon>Bacillati</taxon>
        <taxon>Cyanobacteriota</taxon>
        <taxon>Cyanophyceae</taxon>
        <taxon>Synechococcales</taxon>
        <taxon>Synechococcaceae</taxon>
        <taxon>Synechococcus</taxon>
    </lineage>
</organism>